<comment type="function">
    <text evidence="1">NDH-1 shuttles electrons from NADH, via FMN and iron-sulfur (Fe-S) centers, to quinones in the respiratory chain. The immediate electron acceptor for the enzyme in this species is believed to be a menaquinone. Couples the redox reaction to proton translocation (for every two electrons transferred, four hydrogen ions are translocated across the cytoplasmic membrane), and thus conserves the redox energy in a proton gradient.</text>
</comment>
<comment type="catalytic activity">
    <reaction evidence="1">
        <text>a quinone + NADH + 5 H(+)(in) = a quinol + NAD(+) + 4 H(+)(out)</text>
        <dbReference type="Rhea" id="RHEA:57888"/>
        <dbReference type="ChEBI" id="CHEBI:15378"/>
        <dbReference type="ChEBI" id="CHEBI:24646"/>
        <dbReference type="ChEBI" id="CHEBI:57540"/>
        <dbReference type="ChEBI" id="CHEBI:57945"/>
        <dbReference type="ChEBI" id="CHEBI:132124"/>
    </reaction>
</comment>
<comment type="subunit">
    <text evidence="1">NDH-1 is composed of 14 different subunits. Subunits NuoA, H, J, K, L, M, N constitute the membrane sector of the complex.</text>
</comment>
<comment type="subcellular location">
    <subcellularLocation>
        <location evidence="1">Cell membrane</location>
        <topology evidence="1">Multi-pass membrane protein</topology>
    </subcellularLocation>
</comment>
<comment type="similarity">
    <text evidence="1">Belongs to the complex I subunit 2 family.</text>
</comment>
<reference key="1">
    <citation type="submission" date="2007-10" db="EMBL/GenBank/DDBJ databases">
        <title>Complete sequence of Salinispora arenicola CNS-205.</title>
        <authorList>
            <consortium name="US DOE Joint Genome Institute"/>
            <person name="Copeland A."/>
            <person name="Lucas S."/>
            <person name="Lapidus A."/>
            <person name="Barry K."/>
            <person name="Glavina del Rio T."/>
            <person name="Dalin E."/>
            <person name="Tice H."/>
            <person name="Pitluck S."/>
            <person name="Foster B."/>
            <person name="Schmutz J."/>
            <person name="Larimer F."/>
            <person name="Land M."/>
            <person name="Hauser L."/>
            <person name="Kyrpides N."/>
            <person name="Ivanova N."/>
            <person name="Jensen P.R."/>
            <person name="Moore B.S."/>
            <person name="Penn K."/>
            <person name="Jenkins C."/>
            <person name="Udwary D."/>
            <person name="Xiang L."/>
            <person name="Gontang E."/>
            <person name="Richardson P."/>
        </authorList>
    </citation>
    <scope>NUCLEOTIDE SEQUENCE [LARGE SCALE GENOMIC DNA]</scope>
    <source>
        <strain>CNS-205</strain>
    </source>
</reference>
<gene>
    <name evidence="1" type="primary">nuoN</name>
    <name type="ordered locus">Sare_4450</name>
</gene>
<dbReference type="EC" id="7.1.1.-" evidence="1"/>
<dbReference type="EMBL" id="CP000850">
    <property type="protein sequence ID" value="ABW00225.1"/>
    <property type="molecule type" value="Genomic_DNA"/>
</dbReference>
<dbReference type="SMR" id="A8M609"/>
<dbReference type="STRING" id="391037.Sare_4450"/>
<dbReference type="KEGG" id="saq:Sare_4450"/>
<dbReference type="PATRIC" id="fig|391037.6.peg.4494"/>
<dbReference type="eggNOG" id="COG1007">
    <property type="taxonomic scope" value="Bacteria"/>
</dbReference>
<dbReference type="HOGENOM" id="CLU_007100_1_1_11"/>
<dbReference type="OrthoDB" id="9811718at2"/>
<dbReference type="GO" id="GO:0005886">
    <property type="term" value="C:plasma membrane"/>
    <property type="evidence" value="ECO:0007669"/>
    <property type="project" value="UniProtKB-SubCell"/>
</dbReference>
<dbReference type="GO" id="GO:0008137">
    <property type="term" value="F:NADH dehydrogenase (ubiquinone) activity"/>
    <property type="evidence" value="ECO:0007669"/>
    <property type="project" value="InterPro"/>
</dbReference>
<dbReference type="GO" id="GO:0050136">
    <property type="term" value="F:NADH:ubiquinone reductase (non-electrogenic) activity"/>
    <property type="evidence" value="ECO:0007669"/>
    <property type="project" value="UniProtKB-UniRule"/>
</dbReference>
<dbReference type="GO" id="GO:0048038">
    <property type="term" value="F:quinone binding"/>
    <property type="evidence" value="ECO:0007669"/>
    <property type="project" value="UniProtKB-KW"/>
</dbReference>
<dbReference type="GO" id="GO:0042773">
    <property type="term" value="P:ATP synthesis coupled electron transport"/>
    <property type="evidence" value="ECO:0007669"/>
    <property type="project" value="InterPro"/>
</dbReference>
<dbReference type="HAMAP" id="MF_00445">
    <property type="entry name" value="NDH1_NuoN_1"/>
    <property type="match status" value="1"/>
</dbReference>
<dbReference type="InterPro" id="IPR010096">
    <property type="entry name" value="NADH-Q_OxRdtase_suN/2"/>
</dbReference>
<dbReference type="InterPro" id="IPR001750">
    <property type="entry name" value="ND/Mrp_TM"/>
</dbReference>
<dbReference type="NCBIfam" id="TIGR01770">
    <property type="entry name" value="NDH_I_N"/>
    <property type="match status" value="1"/>
</dbReference>
<dbReference type="NCBIfam" id="NF004441">
    <property type="entry name" value="PRK05777.1-4"/>
    <property type="match status" value="1"/>
</dbReference>
<dbReference type="PANTHER" id="PTHR22773">
    <property type="entry name" value="NADH DEHYDROGENASE"/>
    <property type="match status" value="1"/>
</dbReference>
<dbReference type="Pfam" id="PF00361">
    <property type="entry name" value="Proton_antipo_M"/>
    <property type="match status" value="1"/>
</dbReference>
<keyword id="KW-1003">Cell membrane</keyword>
<keyword id="KW-0472">Membrane</keyword>
<keyword id="KW-0520">NAD</keyword>
<keyword id="KW-0874">Quinone</keyword>
<keyword id="KW-1278">Translocase</keyword>
<keyword id="KW-0812">Transmembrane</keyword>
<keyword id="KW-1133">Transmembrane helix</keyword>
<keyword id="KW-0813">Transport</keyword>
<feature type="chain" id="PRO_0000391221" description="NADH-quinone oxidoreductase subunit N">
    <location>
        <begin position="1"/>
        <end position="517"/>
    </location>
</feature>
<feature type="transmembrane region" description="Helical" evidence="1">
    <location>
        <begin position="14"/>
        <end position="34"/>
    </location>
</feature>
<feature type="transmembrane region" description="Helical" evidence="1">
    <location>
        <begin position="40"/>
        <end position="60"/>
    </location>
</feature>
<feature type="transmembrane region" description="Helical" evidence="1">
    <location>
        <begin position="77"/>
        <end position="97"/>
    </location>
</feature>
<feature type="transmembrane region" description="Helical" evidence="1">
    <location>
        <begin position="131"/>
        <end position="151"/>
    </location>
</feature>
<feature type="transmembrane region" description="Helical" evidence="1">
    <location>
        <begin position="154"/>
        <end position="174"/>
    </location>
</feature>
<feature type="transmembrane region" description="Helical" evidence="1">
    <location>
        <begin position="189"/>
        <end position="209"/>
    </location>
</feature>
<feature type="transmembrane region" description="Helical" evidence="1">
    <location>
        <begin position="238"/>
        <end position="258"/>
    </location>
</feature>
<feature type="transmembrane region" description="Helical" evidence="1">
    <location>
        <begin position="272"/>
        <end position="292"/>
    </location>
</feature>
<feature type="transmembrane region" description="Helical" evidence="1">
    <location>
        <begin position="306"/>
        <end position="326"/>
    </location>
</feature>
<feature type="transmembrane region" description="Helical" evidence="1">
    <location>
        <begin position="334"/>
        <end position="354"/>
    </location>
</feature>
<feature type="transmembrane region" description="Helical" evidence="1">
    <location>
        <begin position="362"/>
        <end position="382"/>
    </location>
</feature>
<feature type="transmembrane region" description="Helical" evidence="1">
    <location>
        <begin position="404"/>
        <end position="424"/>
    </location>
</feature>
<feature type="transmembrane region" description="Helical" evidence="1">
    <location>
        <begin position="451"/>
        <end position="471"/>
    </location>
</feature>
<feature type="transmembrane region" description="Helical" evidence="1">
    <location>
        <begin position="481"/>
        <end position="501"/>
    </location>
</feature>
<sequence>MSELKLPSIDYVALAPTLILLGAALVGVLVEAFVPRRLRHMVQLTVAMLAVLSALTMVVVNANDRLITIGGAIAVDGPALFLQGAILVLAAMALLLIGERSVERGGAFVAQAAVTAESADDRRQAEGRPGATEVYPLTSFAVGGMLIFVAANDLLTMFIALEVLSLPLYLLCALARRRRLLSQEAAMKYFLLGAYASAFFLFGVALVYGYTAGVPDRAAGVDFATIDAAVSESQSSSVLLFGGMALIAIGLLFKAAAAPFHVWTPDVYQGAPTPITGFMAACTKVAAFGALLRVFHVAFEGARWDFTPILGVVAVLTMLVGAVLAVTQTDIKRLLAYSSIANAGYLLVGVLAPSSEGVSGTMFYLVAYGFSVLAAFAVVTLVRDGDGEATHLSRWAGLGQRSPFYAGLFTFILLAFAGIPLTSGFTSKFAVFSAAFDGGQGWLVVAGVLTSMVLAFPYLRVVVLMWLSEPGESTPAVVMPGWLTSAALTIGVVATLVLGVVPQPLLDLAAGAAEFVR</sequence>
<evidence type="ECO:0000255" key="1">
    <source>
        <dbReference type="HAMAP-Rule" id="MF_00445"/>
    </source>
</evidence>
<proteinExistence type="inferred from homology"/>
<organism>
    <name type="scientific">Salinispora arenicola (strain CNS-205)</name>
    <dbReference type="NCBI Taxonomy" id="391037"/>
    <lineage>
        <taxon>Bacteria</taxon>
        <taxon>Bacillati</taxon>
        <taxon>Actinomycetota</taxon>
        <taxon>Actinomycetes</taxon>
        <taxon>Micromonosporales</taxon>
        <taxon>Micromonosporaceae</taxon>
        <taxon>Salinispora</taxon>
    </lineage>
</organism>
<accession>A8M609</accession>
<name>NUON_SALAI</name>
<protein>
    <recommendedName>
        <fullName evidence="1">NADH-quinone oxidoreductase subunit N</fullName>
        <ecNumber evidence="1">7.1.1.-</ecNumber>
    </recommendedName>
    <alternativeName>
        <fullName evidence="1">NADH dehydrogenase I subunit N</fullName>
    </alternativeName>
    <alternativeName>
        <fullName evidence="1">NDH-1 subunit N</fullName>
    </alternativeName>
</protein>